<comment type="function">
    <text evidence="1">Produces ATP from ADP in the presence of a proton gradient across the membrane.</text>
</comment>
<comment type="similarity">
    <text evidence="1">Belongs to the V-ATPase D subunit family.</text>
</comment>
<gene>
    <name evidence="1" type="primary">atpD</name>
    <name type="ordered locus">Cthe_2269</name>
</gene>
<feature type="chain" id="PRO_1000059155" description="V-type ATP synthase subunit D">
    <location>
        <begin position="1"/>
        <end position="222"/>
    </location>
</feature>
<keyword id="KW-0066">ATP synthesis</keyword>
<keyword id="KW-0375">Hydrogen ion transport</keyword>
<keyword id="KW-0406">Ion transport</keyword>
<keyword id="KW-1185">Reference proteome</keyword>
<keyword id="KW-0813">Transport</keyword>
<organism>
    <name type="scientific">Acetivibrio thermocellus (strain ATCC 27405 / DSM 1237 / JCM 9322 / NBRC 103400 / NCIMB 10682 / NRRL B-4536 / VPI 7372)</name>
    <name type="common">Clostridium thermocellum</name>
    <dbReference type="NCBI Taxonomy" id="203119"/>
    <lineage>
        <taxon>Bacteria</taxon>
        <taxon>Bacillati</taxon>
        <taxon>Bacillota</taxon>
        <taxon>Clostridia</taxon>
        <taxon>Eubacteriales</taxon>
        <taxon>Oscillospiraceae</taxon>
        <taxon>Acetivibrio</taxon>
    </lineage>
</organism>
<sequence length="222" mass="25611">MAIMRVNPTRMELTRLKKRLQVARRGHKLLKDKLDELMKQFLDLVRKNKELREKVEEMLMKAHQDFLIARAVMSSEGLEAALMLPKQSISLDVSTQNIMSVEVPVLKFTTSSSDESDIYPYGFASTSGELDGAILTLSKVLPYMLELAQMEKSSQLLAQEIEKTRRRVNALEYVMIPQLTETIKYISMKLDENERGNITRLMKVKDMMLEQAHNFKEKLNEA</sequence>
<dbReference type="EMBL" id="CP000568">
    <property type="protein sequence ID" value="ABN53471.1"/>
    <property type="molecule type" value="Genomic_DNA"/>
</dbReference>
<dbReference type="RefSeq" id="WP_003513511.1">
    <property type="nucleotide sequence ID" value="NC_009012.1"/>
</dbReference>
<dbReference type="SMR" id="A3DHP2"/>
<dbReference type="STRING" id="203119.Cthe_2269"/>
<dbReference type="GeneID" id="35804200"/>
<dbReference type="KEGG" id="cth:Cthe_2269"/>
<dbReference type="eggNOG" id="COG1394">
    <property type="taxonomic scope" value="Bacteria"/>
</dbReference>
<dbReference type="HOGENOM" id="CLU_069688_2_1_9"/>
<dbReference type="OrthoDB" id="9781718at2"/>
<dbReference type="Proteomes" id="UP000002145">
    <property type="component" value="Chromosome"/>
</dbReference>
<dbReference type="GO" id="GO:0005524">
    <property type="term" value="F:ATP binding"/>
    <property type="evidence" value="ECO:0007669"/>
    <property type="project" value="UniProtKB-UniRule"/>
</dbReference>
<dbReference type="GO" id="GO:0046933">
    <property type="term" value="F:proton-transporting ATP synthase activity, rotational mechanism"/>
    <property type="evidence" value="ECO:0007669"/>
    <property type="project" value="UniProtKB-UniRule"/>
</dbReference>
<dbReference type="GO" id="GO:0046961">
    <property type="term" value="F:proton-transporting ATPase activity, rotational mechanism"/>
    <property type="evidence" value="ECO:0007669"/>
    <property type="project" value="InterPro"/>
</dbReference>
<dbReference type="GO" id="GO:0042777">
    <property type="term" value="P:proton motive force-driven plasma membrane ATP synthesis"/>
    <property type="evidence" value="ECO:0007669"/>
    <property type="project" value="UniProtKB-UniRule"/>
</dbReference>
<dbReference type="FunFam" id="1.10.287.3240:FF:000007">
    <property type="entry name" value="V-type ATP synthase subunit D"/>
    <property type="match status" value="1"/>
</dbReference>
<dbReference type="Gene3D" id="1.10.287.3240">
    <property type="match status" value="1"/>
</dbReference>
<dbReference type="HAMAP" id="MF_00271">
    <property type="entry name" value="ATP_synth_D_arch"/>
    <property type="match status" value="1"/>
</dbReference>
<dbReference type="InterPro" id="IPR002699">
    <property type="entry name" value="V_ATPase_D"/>
</dbReference>
<dbReference type="NCBIfam" id="NF001543">
    <property type="entry name" value="PRK00373.1-2"/>
    <property type="match status" value="1"/>
</dbReference>
<dbReference type="NCBIfam" id="TIGR00309">
    <property type="entry name" value="V_ATPase_subD"/>
    <property type="match status" value="1"/>
</dbReference>
<dbReference type="PANTHER" id="PTHR11671">
    <property type="entry name" value="V-TYPE ATP SYNTHASE SUBUNIT D"/>
    <property type="match status" value="1"/>
</dbReference>
<dbReference type="Pfam" id="PF01813">
    <property type="entry name" value="ATP-synt_D"/>
    <property type="match status" value="1"/>
</dbReference>
<evidence type="ECO:0000255" key="1">
    <source>
        <dbReference type="HAMAP-Rule" id="MF_00271"/>
    </source>
</evidence>
<reference key="1">
    <citation type="submission" date="2007-02" db="EMBL/GenBank/DDBJ databases">
        <title>Complete sequence of Clostridium thermocellum ATCC 27405.</title>
        <authorList>
            <consortium name="US DOE Joint Genome Institute"/>
            <person name="Copeland A."/>
            <person name="Lucas S."/>
            <person name="Lapidus A."/>
            <person name="Barry K."/>
            <person name="Detter J.C."/>
            <person name="Glavina del Rio T."/>
            <person name="Hammon N."/>
            <person name="Israni S."/>
            <person name="Dalin E."/>
            <person name="Tice H."/>
            <person name="Pitluck S."/>
            <person name="Chertkov O."/>
            <person name="Brettin T."/>
            <person name="Bruce D."/>
            <person name="Han C."/>
            <person name="Tapia R."/>
            <person name="Gilna P."/>
            <person name="Schmutz J."/>
            <person name="Larimer F."/>
            <person name="Land M."/>
            <person name="Hauser L."/>
            <person name="Kyrpides N."/>
            <person name="Mikhailova N."/>
            <person name="Wu J.H.D."/>
            <person name="Newcomb M."/>
            <person name="Richardson P."/>
        </authorList>
    </citation>
    <scope>NUCLEOTIDE SEQUENCE [LARGE SCALE GENOMIC DNA]</scope>
    <source>
        <strain>ATCC 27405 / DSM 1237 / JCM 9322 / NBRC 103400 / NCIMB 10682 / NRRL B-4536 / VPI 7372</strain>
    </source>
</reference>
<proteinExistence type="inferred from homology"/>
<accession>A3DHP2</accession>
<protein>
    <recommendedName>
        <fullName evidence="1">V-type ATP synthase subunit D</fullName>
    </recommendedName>
    <alternativeName>
        <fullName evidence="1">V-ATPase subunit D</fullName>
    </alternativeName>
</protein>
<name>VATD_ACET2</name>